<evidence type="ECO:0000255" key="1">
    <source>
        <dbReference type="HAMAP-Rule" id="MF_00651"/>
    </source>
</evidence>
<evidence type="ECO:0000305" key="2"/>
<sequence length="163" mass="17478">MPASVLPLIEAAAHWPERGALVGLDLGTKTIGVAVSDPDRRLATGVETLQRKTFTADAARLLAIAGERNAAGFVLGLPINMDGSEGPRAQSTRAFARNLARLTDLAIGLWDERLSTVAVERELIGMDMSRAKRAKVIDEHAAIFILQGALDRLAVLRRTSKAN</sequence>
<dbReference type="EC" id="3.1.-.-" evidence="1"/>
<dbReference type="EMBL" id="CP000319">
    <property type="protein sequence ID" value="ABE63071.1"/>
    <property type="status" value="ALT_INIT"/>
    <property type="molecule type" value="Genomic_DNA"/>
</dbReference>
<dbReference type="RefSeq" id="WP_041358951.1">
    <property type="nucleotide sequence ID" value="NC_007964.1"/>
</dbReference>
<dbReference type="SMR" id="Q1QL26"/>
<dbReference type="STRING" id="323097.Nham_2279"/>
<dbReference type="KEGG" id="nha:Nham_2279"/>
<dbReference type="eggNOG" id="COG0816">
    <property type="taxonomic scope" value="Bacteria"/>
</dbReference>
<dbReference type="HOGENOM" id="CLU_098240_1_1_5"/>
<dbReference type="OrthoDB" id="9796140at2"/>
<dbReference type="Proteomes" id="UP000001953">
    <property type="component" value="Chromosome"/>
</dbReference>
<dbReference type="GO" id="GO:0005829">
    <property type="term" value="C:cytosol"/>
    <property type="evidence" value="ECO:0007669"/>
    <property type="project" value="TreeGrafter"/>
</dbReference>
<dbReference type="GO" id="GO:0004518">
    <property type="term" value="F:nuclease activity"/>
    <property type="evidence" value="ECO:0007669"/>
    <property type="project" value="UniProtKB-KW"/>
</dbReference>
<dbReference type="GO" id="GO:0000967">
    <property type="term" value="P:rRNA 5'-end processing"/>
    <property type="evidence" value="ECO:0007669"/>
    <property type="project" value="UniProtKB-UniRule"/>
</dbReference>
<dbReference type="CDD" id="cd16964">
    <property type="entry name" value="YqgF"/>
    <property type="match status" value="1"/>
</dbReference>
<dbReference type="Gene3D" id="3.30.420.140">
    <property type="entry name" value="YqgF/RNase H-like domain"/>
    <property type="match status" value="1"/>
</dbReference>
<dbReference type="HAMAP" id="MF_00651">
    <property type="entry name" value="Nuclease_YqgF"/>
    <property type="match status" value="1"/>
</dbReference>
<dbReference type="InterPro" id="IPR012337">
    <property type="entry name" value="RNaseH-like_sf"/>
</dbReference>
<dbReference type="InterPro" id="IPR005227">
    <property type="entry name" value="YqgF"/>
</dbReference>
<dbReference type="InterPro" id="IPR006641">
    <property type="entry name" value="YqgF/RNaseH-like_dom"/>
</dbReference>
<dbReference type="InterPro" id="IPR037027">
    <property type="entry name" value="YqgF/RNaseH-like_dom_sf"/>
</dbReference>
<dbReference type="NCBIfam" id="TIGR00250">
    <property type="entry name" value="RNAse_H_YqgF"/>
    <property type="match status" value="1"/>
</dbReference>
<dbReference type="PANTHER" id="PTHR33317">
    <property type="entry name" value="POLYNUCLEOTIDYL TRANSFERASE, RIBONUCLEASE H-LIKE SUPERFAMILY PROTEIN"/>
    <property type="match status" value="1"/>
</dbReference>
<dbReference type="PANTHER" id="PTHR33317:SF4">
    <property type="entry name" value="POLYNUCLEOTIDYL TRANSFERASE, RIBONUCLEASE H-LIKE SUPERFAMILY PROTEIN"/>
    <property type="match status" value="1"/>
</dbReference>
<dbReference type="Pfam" id="PF03652">
    <property type="entry name" value="RuvX"/>
    <property type="match status" value="1"/>
</dbReference>
<dbReference type="SMART" id="SM00732">
    <property type="entry name" value="YqgFc"/>
    <property type="match status" value="1"/>
</dbReference>
<dbReference type="SUPFAM" id="SSF53098">
    <property type="entry name" value="Ribonuclease H-like"/>
    <property type="match status" value="1"/>
</dbReference>
<name>YQGF_NITHX</name>
<proteinExistence type="inferred from homology"/>
<protein>
    <recommendedName>
        <fullName evidence="1">Putative pre-16S rRNA nuclease</fullName>
        <ecNumber evidence="1">3.1.-.-</ecNumber>
    </recommendedName>
</protein>
<reference key="1">
    <citation type="submission" date="2006-03" db="EMBL/GenBank/DDBJ databases">
        <title>Complete sequence of chromosome of Nitrobacter hamburgensis X14.</title>
        <authorList>
            <consortium name="US DOE Joint Genome Institute"/>
            <person name="Copeland A."/>
            <person name="Lucas S."/>
            <person name="Lapidus A."/>
            <person name="Barry K."/>
            <person name="Detter J.C."/>
            <person name="Glavina del Rio T."/>
            <person name="Hammon N."/>
            <person name="Israni S."/>
            <person name="Dalin E."/>
            <person name="Tice H."/>
            <person name="Pitluck S."/>
            <person name="Chain P."/>
            <person name="Malfatti S."/>
            <person name="Shin M."/>
            <person name="Vergez L."/>
            <person name="Schmutz J."/>
            <person name="Larimer F."/>
            <person name="Land M."/>
            <person name="Hauser L."/>
            <person name="Kyrpides N."/>
            <person name="Ivanova N."/>
            <person name="Ward B."/>
            <person name="Arp D."/>
            <person name="Klotz M."/>
            <person name="Stein L."/>
            <person name="O'Mullan G."/>
            <person name="Starkenburg S."/>
            <person name="Sayavedra L."/>
            <person name="Poret-Peterson A.T."/>
            <person name="Gentry M.E."/>
            <person name="Bruce D."/>
            <person name="Richardson P."/>
        </authorList>
    </citation>
    <scope>NUCLEOTIDE SEQUENCE [LARGE SCALE GENOMIC DNA]</scope>
    <source>
        <strain>DSM 10229 / NCIMB 13809 / X14</strain>
    </source>
</reference>
<gene>
    <name type="ordered locus">Nham_2279</name>
</gene>
<keyword id="KW-0963">Cytoplasm</keyword>
<keyword id="KW-0378">Hydrolase</keyword>
<keyword id="KW-0540">Nuclease</keyword>
<keyword id="KW-1185">Reference proteome</keyword>
<keyword id="KW-0690">Ribosome biogenesis</keyword>
<comment type="function">
    <text evidence="1">Could be a nuclease involved in processing of the 5'-end of pre-16S rRNA.</text>
</comment>
<comment type="subcellular location">
    <subcellularLocation>
        <location evidence="1">Cytoplasm</location>
    </subcellularLocation>
</comment>
<comment type="similarity">
    <text evidence="1">Belongs to the YqgF nuclease family.</text>
</comment>
<comment type="sequence caution" evidence="2">
    <conflict type="erroneous initiation">
        <sequence resource="EMBL-CDS" id="ABE63071"/>
    </conflict>
    <text>Extended N-terminus.</text>
</comment>
<feature type="chain" id="PRO_0000257554" description="Putative pre-16S rRNA nuclease">
    <location>
        <begin position="1"/>
        <end position="163"/>
    </location>
</feature>
<accession>Q1QL26</accession>
<organism>
    <name type="scientific">Nitrobacter hamburgensis (strain DSM 10229 / NCIMB 13809 / X14)</name>
    <dbReference type="NCBI Taxonomy" id="323097"/>
    <lineage>
        <taxon>Bacteria</taxon>
        <taxon>Pseudomonadati</taxon>
        <taxon>Pseudomonadota</taxon>
        <taxon>Alphaproteobacteria</taxon>
        <taxon>Hyphomicrobiales</taxon>
        <taxon>Nitrobacteraceae</taxon>
        <taxon>Nitrobacter</taxon>
    </lineage>
</organism>